<dbReference type="EMBL" id="AY596636">
    <property type="protein sequence ID" value="AAW67435.1"/>
    <property type="molecule type" value="Genomic_DNA"/>
</dbReference>
<dbReference type="GO" id="GO:0009507">
    <property type="term" value="C:chloroplast"/>
    <property type="evidence" value="ECO:0007669"/>
    <property type="project" value="UniProtKB-SubCell"/>
</dbReference>
<dbReference type="GO" id="GO:0003723">
    <property type="term" value="F:RNA binding"/>
    <property type="evidence" value="ECO:0007669"/>
    <property type="project" value="UniProtKB-KW"/>
</dbReference>
<dbReference type="GO" id="GO:0006397">
    <property type="term" value="P:mRNA processing"/>
    <property type="evidence" value="ECO:0007669"/>
    <property type="project" value="UniProtKB-KW"/>
</dbReference>
<dbReference type="GO" id="GO:0008380">
    <property type="term" value="P:RNA splicing"/>
    <property type="evidence" value="ECO:0007669"/>
    <property type="project" value="UniProtKB-UniRule"/>
</dbReference>
<dbReference type="GO" id="GO:0008033">
    <property type="term" value="P:tRNA processing"/>
    <property type="evidence" value="ECO:0007669"/>
    <property type="project" value="UniProtKB-KW"/>
</dbReference>
<dbReference type="HAMAP" id="MF_01390">
    <property type="entry name" value="MatK"/>
    <property type="match status" value="1"/>
</dbReference>
<dbReference type="InterPro" id="IPR024937">
    <property type="entry name" value="Domain_X"/>
</dbReference>
<dbReference type="InterPro" id="IPR002866">
    <property type="entry name" value="Maturase_MatK"/>
</dbReference>
<dbReference type="InterPro" id="IPR024942">
    <property type="entry name" value="Maturase_MatK_N"/>
</dbReference>
<dbReference type="PANTHER" id="PTHR34811">
    <property type="entry name" value="MATURASE K"/>
    <property type="match status" value="1"/>
</dbReference>
<dbReference type="PANTHER" id="PTHR34811:SF1">
    <property type="entry name" value="MATURASE K"/>
    <property type="match status" value="1"/>
</dbReference>
<dbReference type="Pfam" id="PF01348">
    <property type="entry name" value="Intron_maturas2"/>
    <property type="match status" value="1"/>
</dbReference>
<dbReference type="Pfam" id="PF01824">
    <property type="entry name" value="MatK_N"/>
    <property type="match status" value="1"/>
</dbReference>
<feature type="chain" id="PRO_0000143436" description="Maturase K">
    <location>
        <begin position="1"/>
        <end position="522"/>
    </location>
</feature>
<gene>
    <name evidence="1" type="primary">matK</name>
</gene>
<comment type="function">
    <text evidence="1">Usually encoded in the trnK tRNA gene intron. Probably assists in splicing its own and other chloroplast group II introns.</text>
</comment>
<comment type="subcellular location">
    <subcellularLocation>
        <location>Plastid</location>
        <location>Chloroplast</location>
    </subcellularLocation>
</comment>
<comment type="similarity">
    <text evidence="1">Belongs to the intron maturase 2 family. MatK subfamily.</text>
</comment>
<evidence type="ECO:0000255" key="1">
    <source>
        <dbReference type="HAMAP-Rule" id="MF_01390"/>
    </source>
</evidence>
<reference key="1">
    <citation type="journal article" date="2004" name="Mol. Phylogenet. Evol.">
        <title>Phylogeny of Iris based on chloroplast matK gene and trnK intron sequence data.</title>
        <authorList>
            <person name="Wilson C.A."/>
        </authorList>
    </citation>
    <scope>NUCLEOTIDE SEQUENCE [GENOMIC DNA]</scope>
</reference>
<keyword id="KW-0150">Chloroplast</keyword>
<keyword id="KW-0507">mRNA processing</keyword>
<keyword id="KW-0934">Plastid</keyword>
<keyword id="KW-0694">RNA-binding</keyword>
<keyword id="KW-0819">tRNA processing</keyword>
<geneLocation type="chloroplast"/>
<protein>
    <recommendedName>
        <fullName evidence="1">Maturase K</fullName>
    </recommendedName>
    <alternativeName>
        <fullName evidence="1">Intron maturase</fullName>
    </alternativeName>
</protein>
<organism>
    <name type="scientific">Iris orientalis</name>
    <name type="common">Yellowband iris</name>
    <dbReference type="NCBI Taxonomy" id="93025"/>
    <lineage>
        <taxon>Eukaryota</taxon>
        <taxon>Viridiplantae</taxon>
        <taxon>Streptophyta</taxon>
        <taxon>Embryophyta</taxon>
        <taxon>Tracheophyta</taxon>
        <taxon>Spermatophyta</taxon>
        <taxon>Magnoliopsida</taxon>
        <taxon>Liliopsida</taxon>
        <taxon>Asparagales</taxon>
        <taxon>Iridaceae</taxon>
        <taxon>Iridoideae</taxon>
        <taxon>Irideae</taxon>
        <taxon>Iris</taxon>
    </lineage>
</organism>
<sequence length="522" mass="62161">MEELQGYLEKDGSRQQPFLYPLLFQEYIYALAHDRGFKGSLFYEPAEVFGYDSKSSLALVKRLIIRIYQQNDFLSAVHDSNKNQFVSHHHKNLGYSHFYSQMISEGFAILVEIPFSLRLVSYFEKKEIPKSHNLRSIHSIFPFLEDKLLHLNYVSDILIPHPIHMEILVQILQCWIQDVPLLHFLLFFLHKYHNWNSFLITPKKSIYVFSKENKRLFRFLYNSYVSECEFLLVFLRKQSSYLRLTSFGPFLERRHFYVKMEHLQMQHLILIVVCRDYFQGTLWSYXXXXXXXXXXXXXVILASKGTHLLMKKWKYNFVNLWQYYFHFWYQSYRIHINQLSNHSFYFLGYLSSLPRNSSTVRNQMLENSFIIDTVTKKFETIVPVIFLIGSLSKAQFCTVSGHPISKPIWADLSDSEIIERFGRMCRNLSHYHSGSSKKQGLHRIKYILRLSCARTLARKHKSTVRTFLRRLGSGLLEEFFTEEEQVLSFILPKTIPFTFYGSHKERIWYLDIIRINDLVNHS</sequence>
<name>MATK_IRIOR</name>
<accession>Q5GF70</accession>
<proteinExistence type="inferred from homology"/>